<sequence>MGTLSAPPCTQRIKWKGLLLTASLLNFWNLPTTAQVTIEAEPTKVSEGKDVLLLVHNLPQNLTGYIWYKGQMRDLYHYITSYVVDGEIIIYGPAYSGRETAYSNASLLIQNVTREDAGSYTLHIIKGDDGTRGVTGRFTFTLHLETPKPSISSSNLNPRETMEAVSLTCDPETPDASYLWWMNGQSLPMTHSLKLSETNRTLFLLGVTKYTAGPYECEIRNPVSASRSDPVTLNLLPKLPKPYITINNLNPRENKDVLNFTCEPKSENYTYIWWLNGQSLPVSPRVKRPIENRILILPSVTRNETGPYQCEIRDRYGGIRSDPVTLNVLYGPDLPRIYPSFTYYRSGEVLYLSCSADSNPPAQYSWTINEKFQLPGQKLFIRHITTKHSGLYVCSVRNSATGKESSKSMTVEVSDWTVP</sequence>
<proteinExistence type="evidence at protein level"/>
<organism>
    <name type="scientific">Homo sapiens</name>
    <name type="common">Human</name>
    <dbReference type="NCBI Taxonomy" id="9606"/>
    <lineage>
        <taxon>Eukaryota</taxon>
        <taxon>Metazoa</taxon>
        <taxon>Chordata</taxon>
        <taxon>Craniata</taxon>
        <taxon>Vertebrata</taxon>
        <taxon>Euteleostomi</taxon>
        <taxon>Mammalia</taxon>
        <taxon>Eutheria</taxon>
        <taxon>Euarchontoglires</taxon>
        <taxon>Primates</taxon>
        <taxon>Haplorrhini</taxon>
        <taxon>Catarrhini</taxon>
        <taxon>Hominidae</taxon>
        <taxon>Homo</taxon>
    </lineage>
</organism>
<comment type="interaction">
    <interactant intactId="EBI-716740">
        <id>P11464</id>
    </interactant>
    <interactant intactId="EBI-539828">
        <id>O15294</id>
        <label>OGT</label>
    </interactant>
    <organismsDiffer>false</organismsDiffer>
    <experiments>3</experiments>
</comment>
<comment type="interaction">
    <interactant intactId="EBI-716740">
        <id>P11464</id>
    </interactant>
    <interactant intactId="EBI-779636">
        <id>P01137</id>
        <label>TGFB1</label>
    </interactant>
    <organismsDiffer>false</organismsDiffer>
    <experiments>3</experiments>
</comment>
<comment type="interaction">
    <interactant intactId="EBI-716740">
        <id>P11464</id>
    </interactant>
    <interactant intactId="EBI-15487336">
        <id>PRO_0000033762</id>
        <label>TGFB1</label>
        <dbReference type="UniProtKB" id="P01137"/>
    </interactant>
    <organismsDiffer>false</organismsDiffer>
    <experiments>2</experiments>
</comment>
<comment type="subcellular location">
    <subcellularLocation>
        <location evidence="10">Secreted</location>
    </subcellularLocation>
</comment>
<comment type="alternative products">
    <event type="alternative splicing"/>
    <isoform>
        <id>P11464-1</id>
        <name>1</name>
        <name>PSG-1a</name>
        <sequence type="displayed"/>
    </isoform>
    <isoform>
        <id>P11464-2</id>
        <name>2</name>
        <sequence type="described" ref="VSP_002550"/>
    </isoform>
    <isoform>
        <id>P11464-3</id>
        <name>3</name>
        <sequence type="described" ref="VSP_002549"/>
    </isoform>
    <isoform>
        <id>P11464-4</id>
        <name>4</name>
        <name>PSG-1d</name>
        <sequence type="described" ref="VSP_002548"/>
    </isoform>
</comment>
<comment type="developmental stage">
    <text>PSBG are produced in high quantity during pregnancy.</text>
</comment>
<comment type="similarity">
    <text evidence="10">Belongs to the immunoglobulin superfamily. CEA family.</text>
</comment>
<name>PSG1_HUMAN</name>
<gene>
    <name type="primary">PSG1</name>
    <name type="synonym">B1G1</name>
    <name type="synonym">PSBG1</name>
    <name type="synonym">PSGGA</name>
</gene>
<keyword id="KW-0025">Alternative splicing</keyword>
<keyword id="KW-1015">Disulfide bond</keyword>
<keyword id="KW-0325">Glycoprotein</keyword>
<keyword id="KW-0393">Immunoglobulin domain</keyword>
<keyword id="KW-1267">Proteomics identification</keyword>
<keyword id="KW-1185">Reference proteome</keyword>
<keyword id="KW-0677">Repeat</keyword>
<keyword id="KW-0964">Secreted</keyword>
<keyword id="KW-0732">Signal</keyword>
<evidence type="ECO:0000255" key="1"/>
<evidence type="ECO:0000303" key="2">
    <source>
    </source>
</evidence>
<evidence type="ECO:0000303" key="3">
    <source>
    </source>
</evidence>
<evidence type="ECO:0000303" key="4">
    <source>
    </source>
</evidence>
<evidence type="ECO:0000303" key="5">
    <source>
    </source>
</evidence>
<evidence type="ECO:0000303" key="6">
    <source>
    </source>
</evidence>
<evidence type="ECO:0000303" key="7">
    <source>
    </source>
</evidence>
<evidence type="ECO:0000303" key="8">
    <source>
    </source>
</evidence>
<evidence type="ECO:0000303" key="9">
    <source ref="9"/>
</evidence>
<evidence type="ECO:0000305" key="10"/>
<dbReference type="EMBL" id="M20881">
    <property type="protein sequence ID" value="AAA52603.1"/>
    <property type="molecule type" value="mRNA"/>
</dbReference>
<dbReference type="EMBL" id="M20879">
    <property type="protein sequence ID" value="AAA52602.1"/>
    <property type="molecule type" value="mRNA"/>
</dbReference>
<dbReference type="EMBL" id="M21822">
    <property type="protein sequence ID" value="AAA52601.1"/>
    <property type="molecule type" value="mRNA"/>
</dbReference>
<dbReference type="EMBL" id="M25385">
    <property type="protein sequence ID" value="AAA36513.1"/>
    <property type="molecule type" value="mRNA"/>
</dbReference>
<dbReference type="EMBL" id="M34715">
    <property type="protein sequence ID" value="AAA36511.1"/>
    <property type="molecule type" value="mRNA"/>
</dbReference>
<dbReference type="EMBL" id="M17908">
    <property type="protein sequence ID" value="AAA52590.1"/>
    <property type="molecule type" value="mRNA"/>
</dbReference>
<dbReference type="EMBL" id="M17909">
    <property type="protein sequence ID" value="AAA52591.1"/>
    <property type="molecule type" value="mRNA"/>
</dbReference>
<dbReference type="EMBL" id="M33663">
    <property type="protein sequence ID" value="AAA36517.1"/>
    <property type="molecule type" value="mRNA"/>
</dbReference>
<dbReference type="EMBL" id="M33664">
    <property type="protein sequence ID" value="AAA36515.1"/>
    <property type="molecule type" value="mRNA"/>
</dbReference>
<dbReference type="EMBL" id="J04539">
    <property type="protein sequence ID" value="AAA60204.1"/>
    <property type="molecule type" value="mRNA"/>
</dbReference>
<dbReference type="EMBL" id="M37397">
    <property type="protein sequence ID" value="AAA60960.1"/>
    <property type="molecule type" value="mRNA"/>
</dbReference>
<dbReference type="EMBL" id="CR450329">
    <property type="protein sequence ID" value="CAG29325.1"/>
    <property type="molecule type" value="mRNA"/>
</dbReference>
<dbReference type="EMBL" id="AC005238">
    <property type="protein sequence ID" value="AAC25488.1"/>
    <property type="molecule type" value="Genomic_DNA"/>
</dbReference>
<dbReference type="EMBL" id="AC005238">
    <property type="protein sequence ID" value="AAC25489.1"/>
    <property type="molecule type" value="Genomic_DNA"/>
</dbReference>
<dbReference type="EMBL" id="AC005238">
    <property type="protein sequence ID" value="AAC25490.1"/>
    <property type="molecule type" value="Genomic_DNA"/>
</dbReference>
<dbReference type="EMBL" id="CH471126">
    <property type="protein sequence ID" value="EAW57156.1"/>
    <property type="molecule type" value="Genomic_DNA"/>
</dbReference>
<dbReference type="EMBL" id="BC022338">
    <property type="protein sequence ID" value="AAH22338.1"/>
    <property type="molecule type" value="mRNA"/>
</dbReference>
<dbReference type="EMBL" id="BC058285">
    <property type="protein sequence ID" value="AAH58285.1"/>
    <property type="molecule type" value="mRNA"/>
</dbReference>
<dbReference type="EMBL" id="AH007517">
    <property type="protein sequence ID" value="AAD21020.1"/>
    <property type="molecule type" value="Genomic_DNA"/>
</dbReference>
<dbReference type="CCDS" id="CCDS12612.1">
    <molecule id="P11464-4"/>
</dbReference>
<dbReference type="CCDS" id="CCDS54275.1">
    <molecule id="P11464-1"/>
</dbReference>
<dbReference type="CCDS" id="CCDS59392.1">
    <molecule id="P11464-3"/>
</dbReference>
<dbReference type="CCDS" id="CCDS74380.1">
    <molecule id="P11464-2"/>
</dbReference>
<dbReference type="PIR" id="A27658">
    <property type="entry name" value="A27658"/>
</dbReference>
<dbReference type="PIR" id="A28277">
    <property type="entry name" value="A28277"/>
</dbReference>
<dbReference type="PIR" id="A33258">
    <property type="entry name" value="A33258"/>
</dbReference>
<dbReference type="PIR" id="A35341">
    <property type="entry name" value="A35341"/>
</dbReference>
<dbReference type="PIR" id="A35964">
    <property type="entry name" value="A35964"/>
</dbReference>
<dbReference type="PIR" id="B33258">
    <property type="entry name" value="B33258"/>
</dbReference>
<dbReference type="PIR" id="C43354">
    <property type="entry name" value="C43354"/>
</dbReference>
<dbReference type="PIR" id="D43354">
    <property type="entry name" value="D43354"/>
</dbReference>
<dbReference type="PIR" id="E32268">
    <property type="entry name" value="A31135"/>
</dbReference>
<dbReference type="PIR" id="E43354">
    <property type="entry name" value="E43354"/>
</dbReference>
<dbReference type="RefSeq" id="NP_001171754.1">
    <molecule id="P11464-1"/>
    <property type="nucleotide sequence ID" value="NM_001184825.2"/>
</dbReference>
<dbReference type="RefSeq" id="NP_001171755.1">
    <molecule id="P11464-3"/>
    <property type="nucleotide sequence ID" value="NM_001184826.2"/>
</dbReference>
<dbReference type="RefSeq" id="NP_001284702.1">
    <molecule id="P11464-2"/>
    <property type="nucleotide sequence ID" value="NM_001297773.2"/>
</dbReference>
<dbReference type="RefSeq" id="NP_008836.2">
    <molecule id="P11464-4"/>
    <property type="nucleotide sequence ID" value="NM_006905.2"/>
</dbReference>
<dbReference type="SMR" id="P11464"/>
<dbReference type="BioGRID" id="111644">
    <property type="interactions" value="52"/>
</dbReference>
<dbReference type="FunCoup" id="P11464">
    <property type="interactions" value="67"/>
</dbReference>
<dbReference type="IntAct" id="P11464">
    <property type="interactions" value="36"/>
</dbReference>
<dbReference type="STRING" id="9606.ENSP00000308970"/>
<dbReference type="GlyCosmos" id="P11464">
    <property type="glycosylation" value="7 sites, No reported glycans"/>
</dbReference>
<dbReference type="GlyGen" id="P11464">
    <property type="glycosylation" value="8 sites, 1 O-linked glycan (1 site)"/>
</dbReference>
<dbReference type="iPTMnet" id="P11464"/>
<dbReference type="PhosphoSitePlus" id="P11464"/>
<dbReference type="BioMuta" id="PSG1"/>
<dbReference type="DMDM" id="129661"/>
<dbReference type="jPOST" id="P11464"/>
<dbReference type="MassIVE" id="P11464"/>
<dbReference type="PaxDb" id="9606-ENSP00000308970"/>
<dbReference type="PeptideAtlas" id="P11464"/>
<dbReference type="ProteomicsDB" id="52775">
    <molecule id="P11464-1"/>
</dbReference>
<dbReference type="ProteomicsDB" id="52776">
    <molecule id="P11464-2"/>
</dbReference>
<dbReference type="ProteomicsDB" id="52777">
    <molecule id="P11464-3"/>
</dbReference>
<dbReference type="ProteomicsDB" id="52778">
    <molecule id="P11464-4"/>
</dbReference>
<dbReference type="Antibodypedia" id="35155">
    <property type="antibodies" value="230 antibodies from 26 providers"/>
</dbReference>
<dbReference type="DNASU" id="5669"/>
<dbReference type="Ensembl" id="ENST00000244296.6">
    <molecule id="P11464-4"/>
    <property type="protein sequence ID" value="ENSP00000244296.2"/>
    <property type="gene ID" value="ENSG00000231924.10"/>
</dbReference>
<dbReference type="Ensembl" id="ENST00000312439.10">
    <molecule id="P11464-2"/>
    <property type="protein sequence ID" value="ENSP00000308970.6"/>
    <property type="gene ID" value="ENSG00000231924.10"/>
</dbReference>
<dbReference type="Ensembl" id="ENST00000436291.7">
    <molecule id="P11464-1"/>
    <property type="protein sequence ID" value="ENSP00000413041.2"/>
    <property type="gene ID" value="ENSG00000231924.10"/>
</dbReference>
<dbReference type="Ensembl" id="ENST00000595356.5">
    <molecule id="P11464-3"/>
    <property type="protein sequence ID" value="ENSP00000472610.1"/>
    <property type="gene ID" value="ENSG00000231924.10"/>
</dbReference>
<dbReference type="GeneID" id="5669"/>
<dbReference type="KEGG" id="hsa:5669"/>
<dbReference type="MANE-Select" id="ENST00000436291.7">
    <property type="protein sequence ID" value="ENSP00000413041.2"/>
    <property type="RefSeq nucleotide sequence ID" value="NM_001184825.2"/>
    <property type="RefSeq protein sequence ID" value="NP_001171754.1"/>
</dbReference>
<dbReference type="UCSC" id="uc002ouz.3">
    <molecule id="P11464-1"/>
    <property type="organism name" value="human"/>
</dbReference>
<dbReference type="AGR" id="HGNC:9514"/>
<dbReference type="CTD" id="5669"/>
<dbReference type="DisGeNET" id="5669"/>
<dbReference type="GeneCards" id="PSG1"/>
<dbReference type="HGNC" id="HGNC:9514">
    <property type="gene designation" value="PSG1"/>
</dbReference>
<dbReference type="HPA" id="ENSG00000231924">
    <property type="expression patterns" value="Tissue enriched (placenta)"/>
</dbReference>
<dbReference type="MIM" id="176390">
    <property type="type" value="gene"/>
</dbReference>
<dbReference type="neXtProt" id="NX_P11464"/>
<dbReference type="OpenTargets" id="ENSG00000231924"/>
<dbReference type="PharmGKB" id="PA33861"/>
<dbReference type="VEuPathDB" id="HostDB:ENSG00000231924"/>
<dbReference type="eggNOG" id="ENOG502RXPD">
    <property type="taxonomic scope" value="Eukaryota"/>
</dbReference>
<dbReference type="GeneTree" id="ENSGT01100000263479"/>
<dbReference type="HOGENOM" id="CLU_024555_2_0_1"/>
<dbReference type="InParanoid" id="P11464"/>
<dbReference type="OMA" id="HEIQDRY"/>
<dbReference type="OrthoDB" id="9479347at2759"/>
<dbReference type="PAN-GO" id="P11464">
    <property type="GO annotations" value="5 GO annotations based on evolutionary models"/>
</dbReference>
<dbReference type="PhylomeDB" id="P11464"/>
<dbReference type="TreeFam" id="TF336859"/>
<dbReference type="PathwayCommons" id="P11464"/>
<dbReference type="Reactome" id="R-HSA-202733">
    <property type="pathway name" value="Cell surface interactions at the vascular wall"/>
</dbReference>
<dbReference type="SignaLink" id="P11464"/>
<dbReference type="BioGRID-ORCS" id="5669">
    <property type="hits" value="10 hits in 1054 CRISPR screens"/>
</dbReference>
<dbReference type="ChiTaRS" id="PSG1">
    <property type="organism name" value="human"/>
</dbReference>
<dbReference type="GeneWiki" id="PSG1_(gene)"/>
<dbReference type="GenomeRNAi" id="5669"/>
<dbReference type="Pharos" id="P11464">
    <property type="development level" value="Tbio"/>
</dbReference>
<dbReference type="PRO" id="PR:P11464"/>
<dbReference type="Proteomes" id="UP000005640">
    <property type="component" value="Chromosome 19"/>
</dbReference>
<dbReference type="RNAct" id="P11464">
    <property type="molecule type" value="protein"/>
</dbReference>
<dbReference type="Bgee" id="ENSG00000231924">
    <property type="expression patterns" value="Expressed in placenta and 53 other cell types or tissues"/>
</dbReference>
<dbReference type="ExpressionAtlas" id="P11464">
    <property type="expression patterns" value="baseline and differential"/>
</dbReference>
<dbReference type="GO" id="GO:0005576">
    <property type="term" value="C:extracellular region"/>
    <property type="evidence" value="ECO:0000304"/>
    <property type="project" value="Reactome"/>
</dbReference>
<dbReference type="GO" id="GO:0007565">
    <property type="term" value="P:female pregnancy"/>
    <property type="evidence" value="ECO:0000304"/>
    <property type="project" value="ProtInc"/>
</dbReference>
<dbReference type="CDD" id="cd20948">
    <property type="entry name" value="IgC2_CEACAM5-like"/>
    <property type="match status" value="1"/>
</dbReference>
<dbReference type="CDD" id="cd05740">
    <property type="entry name" value="IgI_hCEACAM_2_4_6_like"/>
    <property type="match status" value="1"/>
</dbReference>
<dbReference type="CDD" id="cd05774">
    <property type="entry name" value="IgV_CEACAM_D1"/>
    <property type="match status" value="1"/>
</dbReference>
<dbReference type="FunFam" id="2.60.40.10:FF:000340">
    <property type="entry name" value="Carcinoembryonic antigen-related cell adhesion molecule 1"/>
    <property type="match status" value="1"/>
</dbReference>
<dbReference type="FunFam" id="2.60.40.10:FF:000517">
    <property type="entry name" value="Carcinoembryonic antigen-related cell adhesion molecule 1"/>
    <property type="match status" value="1"/>
</dbReference>
<dbReference type="FunFam" id="2.60.40.10:FF:000244">
    <property type="entry name" value="carcinoembryonic antigen-related cell adhesion molecule 16"/>
    <property type="match status" value="2"/>
</dbReference>
<dbReference type="Gene3D" id="2.60.40.10">
    <property type="entry name" value="Immunoglobulins"/>
    <property type="match status" value="4"/>
</dbReference>
<dbReference type="InterPro" id="IPR050831">
    <property type="entry name" value="CEA_cell_adhesion"/>
</dbReference>
<dbReference type="InterPro" id="IPR007110">
    <property type="entry name" value="Ig-like_dom"/>
</dbReference>
<dbReference type="InterPro" id="IPR036179">
    <property type="entry name" value="Ig-like_dom_sf"/>
</dbReference>
<dbReference type="InterPro" id="IPR013783">
    <property type="entry name" value="Ig-like_fold"/>
</dbReference>
<dbReference type="InterPro" id="IPR003599">
    <property type="entry name" value="Ig_sub"/>
</dbReference>
<dbReference type="InterPro" id="IPR003598">
    <property type="entry name" value="Ig_sub2"/>
</dbReference>
<dbReference type="InterPro" id="IPR013106">
    <property type="entry name" value="Ig_V-set"/>
</dbReference>
<dbReference type="PANTHER" id="PTHR44427">
    <property type="entry name" value="CARCINOEMBRYONIC ANTIGEN-RELATED CELL ADHESION MOLECULE 19"/>
    <property type="match status" value="1"/>
</dbReference>
<dbReference type="PANTHER" id="PTHR44427:SF16">
    <property type="entry name" value="PREGNANCY-SPECIFIC BETA-1-GLYCOPROTEIN 1"/>
    <property type="match status" value="1"/>
</dbReference>
<dbReference type="Pfam" id="PF13895">
    <property type="entry name" value="Ig_2"/>
    <property type="match status" value="1"/>
</dbReference>
<dbReference type="Pfam" id="PF13927">
    <property type="entry name" value="Ig_3"/>
    <property type="match status" value="2"/>
</dbReference>
<dbReference type="Pfam" id="PF07686">
    <property type="entry name" value="V-set"/>
    <property type="match status" value="1"/>
</dbReference>
<dbReference type="SMART" id="SM00409">
    <property type="entry name" value="IG"/>
    <property type="match status" value="4"/>
</dbReference>
<dbReference type="SMART" id="SM00408">
    <property type="entry name" value="IGc2"/>
    <property type="match status" value="3"/>
</dbReference>
<dbReference type="SUPFAM" id="SSF48726">
    <property type="entry name" value="Immunoglobulin"/>
    <property type="match status" value="4"/>
</dbReference>
<dbReference type="PROSITE" id="PS50835">
    <property type="entry name" value="IG_LIKE"/>
    <property type="match status" value="3"/>
</dbReference>
<protein>
    <recommendedName>
        <fullName>Pregnancy-specific beta-1-glycoprotein 1</fullName>
        <shortName>PS-beta-G-1</shortName>
        <shortName>PSBG-1</shortName>
        <shortName>Pregnancy-specific glycoprotein 1</shortName>
    </recommendedName>
    <alternativeName>
        <fullName>CD66 antigen-like family member F</fullName>
    </alternativeName>
    <alternativeName>
        <fullName>Fetal liver non-specific cross-reactive antigen 1/2</fullName>
        <shortName>FL-NCA-1/2</shortName>
    </alternativeName>
    <alternativeName>
        <fullName>PSG95</fullName>
    </alternativeName>
    <alternativeName>
        <fullName>Pregnancy-specific beta-1 glycoprotein C/D</fullName>
        <shortName>PS-beta-C/D</shortName>
    </alternativeName>
    <cdAntigenName>CD66f</cdAntigenName>
</protein>
<accession>P11464</accession>
<accession>O75236</accession>
<accession>P11462</accession>
<accession>P11463</accession>
<accession>Q15231</accession>
<accession>Q15241</accession>
<accession>Q15243</accession>
<accession>Q16660</accession>
<accession>Q6ICR4</accession>
<accession>Q9P1W5</accession>
<accession>Q9UQ79</accession>
<reference key="1">
    <citation type="journal article" date="1988" name="Biochem. Biophys. Res. Commun.">
        <title>The human pregnancy-specific beta 1-glycoprotein (PS beta G) and the carcinoembryonic antigen (CEA)-related proteins are members of the same multigene family.</title>
        <authorList>
            <person name="Streydio C."/>
            <person name="Lacka K."/>
            <person name="Swillens S."/>
            <person name="Vassart G."/>
        </authorList>
    </citation>
    <scope>NUCLEOTIDE SEQUENCE [MRNA] (ISOFORMS 1 AND 2)</scope>
</reference>
<reference key="2">
    <citation type="journal article" date="1988" name="DNA">
        <title>Characterization of cDNA encoding human pregnancy-specific beta 1-glycoprotein from placenta and extraplacental tissues and their comparison with carcinoembryonic antigen.</title>
        <authorList>
            <person name="Chan W.-Y."/>
            <person name="Borjigin J."/>
            <person name="Zheng Q.-X."/>
            <person name="Shupert W.L."/>
        </authorList>
    </citation>
    <scope>NUCLEOTIDE SEQUENCE [MRNA] (ISOFORM 1)</scope>
</reference>
<reference key="3">
    <citation type="journal article" date="1989" name="Biochem. Biophys. Res. Commun.">
        <title>Carcinoembryonic antigen gene family: molecular cloning of cDNA for a PS-beta-G/FL-NCA glycoprotein with a novel domain arrangement.</title>
        <authorList>
            <person name="Khan W.N."/>
            <person name="Hammarstroem S."/>
        </authorList>
    </citation>
    <scope>NUCLEOTIDE SEQUENCE (ISOFORM 1)</scope>
</reference>
<reference key="4">
    <citation type="journal article" date="1989" name="Biochem. Biophys. Res. Commun.">
        <title>cDNA cloning demonstrates the expression of pregnancy-specific glycoprotein genes, a subgroup of the carcinoembryonic antigen gene family, in fetal liver.</title>
        <authorList>
            <person name="Zimmermann W.A."/>
            <person name="Weiss M."/>
            <person name="Thompson J.A."/>
        </authorList>
    </citation>
    <scope>NUCLEOTIDE SEQUENCE [MRNA] (ISOFORMS 1 AND 4)</scope>
</reference>
<reference key="5">
    <citation type="journal article" date="1990" name="Proc. Natl. Acad. Sci. U.S.A.">
        <title>Linkage of two human pregnancy-specific beta 1-glycoprotein genes: one is associated with hydatidiform mole.</title>
        <authorList>
            <person name="Leslie K.K."/>
            <person name="Watanabe S."/>
            <person name="Lei K.-J."/>
            <person name="Chou D.Y."/>
            <person name="Plouzek C.A."/>
            <person name="Deng H.-C."/>
            <person name="Torres J."/>
            <person name="Chou J.Y."/>
        </authorList>
    </citation>
    <scope>NUCLEOTIDE SEQUENCE [MRNA] (ISOFORMS 1 AND 4)</scope>
</reference>
<reference key="6">
    <citation type="journal article" date="1988" name="J. Biol. Chem.">
        <title>Isolation and characterization of complementary DNAs encoding human pregnancy-specific beta 1-glycoprotein.</title>
        <authorList>
            <person name="Watanabe S."/>
            <person name="Chou J.Y."/>
        </authorList>
    </citation>
    <scope>NUCLEOTIDE SEQUENCE [MRNA] (ISOFORM 3)</scope>
</reference>
<reference key="7">
    <citation type="journal article" date="1989" name="Proc. Natl. Acad. Sci. U.S.A.">
        <title>Molecular cloning and expression of cDNA for a carcinoembryonic antigen-related fetal liver glycoprotein.</title>
        <authorList>
            <person name="Khan W.N."/>
            <person name="Osterman A."/>
            <person name="Hammarstroem S."/>
        </authorList>
    </citation>
    <scope>NUCLEOTIDE SEQUENCE [MRNA] (ISOFORM 4)</scope>
</reference>
<reference key="8">
    <citation type="journal article" date="1990" name="Biochem. Biophys. Res. Commun.">
        <title>Carcinoembryonic antigen gene family members in submandibular salivary gland: demonstration of pregnancy-specific glycoproteins by cDNA cloning.</title>
        <authorList>
            <person name="Zoubir F."/>
            <person name="Khan W.N."/>
            <person name="Hammarstroem S."/>
        </authorList>
    </citation>
    <scope>NUCLEOTIDE SEQUENCE [MRNA] (ISOFORM 4)</scope>
</reference>
<reference key="9">
    <citation type="submission" date="2004-05" db="EMBL/GenBank/DDBJ databases">
        <title>Cloning of human full open reading frames in Gateway(TM) system entry vector (pDONR201).</title>
        <authorList>
            <person name="Ebert L."/>
            <person name="Schick M."/>
            <person name="Neubert P."/>
            <person name="Schatten R."/>
            <person name="Henze S."/>
            <person name="Korn B."/>
        </authorList>
    </citation>
    <scope>NUCLEOTIDE SEQUENCE [LARGE SCALE MRNA] (ISOFORM 4)</scope>
</reference>
<reference key="10">
    <citation type="journal article" date="2004" name="Nature">
        <title>The DNA sequence and biology of human chromosome 19.</title>
        <authorList>
            <person name="Grimwood J."/>
            <person name="Gordon L.A."/>
            <person name="Olsen A.S."/>
            <person name="Terry A."/>
            <person name="Schmutz J."/>
            <person name="Lamerdin J.E."/>
            <person name="Hellsten U."/>
            <person name="Goodstein D."/>
            <person name="Couronne O."/>
            <person name="Tran-Gyamfi M."/>
            <person name="Aerts A."/>
            <person name="Altherr M."/>
            <person name="Ashworth L."/>
            <person name="Bajorek E."/>
            <person name="Black S."/>
            <person name="Branscomb E."/>
            <person name="Caenepeel S."/>
            <person name="Carrano A.V."/>
            <person name="Caoile C."/>
            <person name="Chan Y.M."/>
            <person name="Christensen M."/>
            <person name="Cleland C.A."/>
            <person name="Copeland A."/>
            <person name="Dalin E."/>
            <person name="Dehal P."/>
            <person name="Denys M."/>
            <person name="Detter J.C."/>
            <person name="Escobar J."/>
            <person name="Flowers D."/>
            <person name="Fotopulos D."/>
            <person name="Garcia C."/>
            <person name="Georgescu A.M."/>
            <person name="Glavina T."/>
            <person name="Gomez M."/>
            <person name="Gonzales E."/>
            <person name="Groza M."/>
            <person name="Hammon N."/>
            <person name="Hawkins T."/>
            <person name="Haydu L."/>
            <person name="Ho I."/>
            <person name="Huang W."/>
            <person name="Israni S."/>
            <person name="Jett J."/>
            <person name="Kadner K."/>
            <person name="Kimball H."/>
            <person name="Kobayashi A."/>
            <person name="Larionov V."/>
            <person name="Leem S.-H."/>
            <person name="Lopez F."/>
            <person name="Lou Y."/>
            <person name="Lowry S."/>
            <person name="Malfatti S."/>
            <person name="Martinez D."/>
            <person name="McCready P.M."/>
            <person name="Medina C."/>
            <person name="Morgan J."/>
            <person name="Nelson K."/>
            <person name="Nolan M."/>
            <person name="Ovcharenko I."/>
            <person name="Pitluck S."/>
            <person name="Pollard M."/>
            <person name="Popkie A.P."/>
            <person name="Predki P."/>
            <person name="Quan G."/>
            <person name="Ramirez L."/>
            <person name="Rash S."/>
            <person name="Retterer J."/>
            <person name="Rodriguez A."/>
            <person name="Rogers S."/>
            <person name="Salamov A."/>
            <person name="Salazar A."/>
            <person name="She X."/>
            <person name="Smith D."/>
            <person name="Slezak T."/>
            <person name="Solovyev V."/>
            <person name="Thayer N."/>
            <person name="Tice H."/>
            <person name="Tsai M."/>
            <person name="Ustaszewska A."/>
            <person name="Vo N."/>
            <person name="Wagner M."/>
            <person name="Wheeler J."/>
            <person name="Wu K."/>
            <person name="Xie G."/>
            <person name="Yang J."/>
            <person name="Dubchak I."/>
            <person name="Furey T.S."/>
            <person name="DeJong P."/>
            <person name="Dickson M."/>
            <person name="Gordon D."/>
            <person name="Eichler E.E."/>
            <person name="Pennacchio L.A."/>
            <person name="Richardson P."/>
            <person name="Stubbs L."/>
            <person name="Rokhsar D.S."/>
            <person name="Myers R.M."/>
            <person name="Rubin E.M."/>
            <person name="Lucas S.M."/>
        </authorList>
    </citation>
    <scope>NUCLEOTIDE SEQUENCE [LARGE SCALE GENOMIC DNA] (ISOFORMS 1; 2 AND 3)</scope>
</reference>
<reference key="11">
    <citation type="submission" date="2005-07" db="EMBL/GenBank/DDBJ databases">
        <authorList>
            <person name="Mural R.J."/>
            <person name="Istrail S."/>
            <person name="Sutton G.G."/>
            <person name="Florea L."/>
            <person name="Halpern A.L."/>
            <person name="Mobarry C.M."/>
            <person name="Lippert R."/>
            <person name="Walenz B."/>
            <person name="Shatkay H."/>
            <person name="Dew I."/>
            <person name="Miller J.R."/>
            <person name="Flanigan M.J."/>
            <person name="Edwards N.J."/>
            <person name="Bolanos R."/>
            <person name="Fasulo D."/>
            <person name="Halldorsson B.V."/>
            <person name="Hannenhalli S."/>
            <person name="Turner R."/>
            <person name="Yooseph S."/>
            <person name="Lu F."/>
            <person name="Nusskern D.R."/>
            <person name="Shue B.C."/>
            <person name="Zheng X.H."/>
            <person name="Zhong F."/>
            <person name="Delcher A.L."/>
            <person name="Huson D.H."/>
            <person name="Kravitz S.A."/>
            <person name="Mouchard L."/>
            <person name="Reinert K."/>
            <person name="Remington K.A."/>
            <person name="Clark A.G."/>
            <person name="Waterman M.S."/>
            <person name="Eichler E.E."/>
            <person name="Adams M.D."/>
            <person name="Hunkapiller M.W."/>
            <person name="Myers E.W."/>
            <person name="Venter J.C."/>
        </authorList>
    </citation>
    <scope>NUCLEOTIDE SEQUENCE [LARGE SCALE GENOMIC DNA]</scope>
</reference>
<reference key="12">
    <citation type="journal article" date="2004" name="Genome Res.">
        <title>The status, quality, and expansion of the NIH full-length cDNA project: the Mammalian Gene Collection (MGC).</title>
        <authorList>
            <consortium name="The MGC Project Team"/>
        </authorList>
    </citation>
    <scope>NUCLEOTIDE SEQUENCE [LARGE SCALE MRNA] (ISOFORM 4)</scope>
    <source>
        <tissue>Placenta</tissue>
    </source>
</reference>
<reference key="13">
    <citation type="submission" date="1998-11" db="EMBL/GenBank/DDBJ databases">
        <title>Characterization of upstream promotor region, exon1 and exon2 of the PSG gene family.</title>
        <authorList>
            <person name="Fraengsmyr L."/>
            <person name="Teglund S."/>
            <person name="Israelsson A."/>
            <person name="Hammarstroem S."/>
        </authorList>
    </citation>
    <scope>NUCLEOTIDE SEQUENCE [GENOMIC DNA] OF 1-143</scope>
</reference>
<feature type="signal peptide">
    <location>
        <begin position="1"/>
        <end position="34"/>
    </location>
</feature>
<feature type="chain" id="PRO_0000014908" description="Pregnancy-specific beta-1-glycoprotein 1">
    <location>
        <begin position="35"/>
        <end position="419"/>
    </location>
</feature>
<feature type="domain" description="Ig-like V-type">
    <location>
        <begin position="35"/>
        <end position="144"/>
    </location>
</feature>
<feature type="domain" description="Ig-like C2-type 1">
    <location>
        <begin position="149"/>
        <end position="234"/>
    </location>
</feature>
<feature type="domain" description="Ig-like C2-type 2">
    <location>
        <begin position="240"/>
        <end position="327"/>
    </location>
</feature>
<feature type="domain" description="Ig-like C2-type 3">
    <location>
        <begin position="335"/>
        <end position="410"/>
    </location>
</feature>
<feature type="glycosylation site" description="N-linked (GlcNAc...) asparagine" evidence="1">
    <location>
        <position position="61"/>
    </location>
</feature>
<feature type="glycosylation site" description="N-linked (GlcNAc...) asparagine" evidence="1">
    <location>
        <position position="104"/>
    </location>
</feature>
<feature type="glycosylation site" description="N-linked (GlcNAc...) asparagine" evidence="1">
    <location>
        <position position="111"/>
    </location>
</feature>
<feature type="glycosylation site" description="N-linked (GlcNAc...) asparagine" evidence="1">
    <location>
        <position position="199"/>
    </location>
</feature>
<feature type="glycosylation site" description="N-linked (GlcNAc...) asparagine" evidence="1">
    <location>
        <position position="259"/>
    </location>
</feature>
<feature type="glycosylation site" description="N-linked (GlcNAc...) asparagine" evidence="1">
    <location>
        <position position="268"/>
    </location>
</feature>
<feature type="glycosylation site" description="N-linked (GlcNAc...) asparagine" evidence="1">
    <location>
        <position position="303"/>
    </location>
</feature>
<feature type="disulfide bond" evidence="10">
    <location>
        <begin position="169"/>
        <end position="217"/>
    </location>
</feature>
<feature type="disulfide bond" evidence="10">
    <location>
        <begin position="262"/>
        <end position="310"/>
    </location>
</feature>
<feature type="disulfide bond" evidence="10">
    <location>
        <begin position="354"/>
        <end position="394"/>
    </location>
</feature>
<feature type="splice variant" id="VSP_002550" description="In isoform 2." evidence="8">
    <original>DWTVP</original>
    <variation>AYSSSINYTSGNRN</variation>
    <location>
        <begin position="415"/>
        <end position="419"/>
    </location>
</feature>
<feature type="splice variant" id="VSP_002549" description="In isoform 3." evidence="7">
    <original>DWTVP</original>
    <variation>EAL</variation>
    <location>
        <begin position="415"/>
        <end position="419"/>
    </location>
</feature>
<feature type="splice variant" id="VSP_002548" description="In isoform 4." evidence="2 3 4 5 6 9">
    <original>DWTVP</original>
    <variation>GKWIPASLAIGF</variation>
    <location>
        <begin position="415"/>
        <end position="419"/>
    </location>
</feature>
<feature type="sequence variant" id="VAR_056063" description="In dbSNP:rs707744.">
    <original>E</original>
    <variation>Q</variation>
    <location>
        <position position="41"/>
    </location>
</feature>
<feature type="sequence variant" id="VAR_056064" description="In dbSNP:rs707745.">
    <original>T</original>
    <variation>P</variation>
    <location>
        <position position="43"/>
    </location>
</feature>
<feature type="sequence variant" id="VAR_056065" description="In dbSNP:rs1058956.">
    <original>E</original>
    <variation>K</variation>
    <location>
        <position position="47"/>
    </location>
</feature>
<feature type="sequence variant" id="VAR_056066" description="In dbSNP:rs1064479.">
    <original>T</original>
    <variation>A</variation>
    <location>
        <position position="63"/>
    </location>
</feature>
<feature type="sequence variant" id="VAR_056067" description="In dbSNP:rs1064480.">
    <original>R</original>
    <variation>K</variation>
    <location>
        <position position="73"/>
    </location>
</feature>
<feature type="sequence variant" id="VAR_056068" description="In dbSNP:rs1058661.">
    <original>E</original>
    <variation>Q</variation>
    <location>
        <position position="87"/>
    </location>
</feature>
<feature type="sequence variant" id="VAR_056069" description="In dbSNP:rs707748.">
    <original>A</original>
    <variation>V</variation>
    <location>
        <position position="101"/>
    </location>
</feature>
<feature type="sequence variant" id="VAR_059408" description="In dbSNP:rs1058960.">
    <original>I</original>
    <variation>V</variation>
    <location>
        <position position="125"/>
    </location>
</feature>
<feature type="sequence variant" id="VAR_056070" description="In dbSNP:rs1058671.">
    <original>V</original>
    <variation>E</variation>
    <location>
        <position position="134"/>
    </location>
</feature>
<feature type="sequence variant" id="VAR_056071" description="In dbSNP:rs1058692.">
    <original>E</original>
    <variation>K</variation>
    <location>
        <position position="197"/>
    </location>
</feature>
<feature type="sequence variant" id="VAR_056072" description="In dbSNP:rs1058693.">
    <original>T</original>
    <variation>N</variation>
    <location>
        <position position="198"/>
    </location>
</feature>
<feature type="sequence conflict" description="In Ref. 4, 5 and 6." evidence="10" ref="4 5 6">
    <original>EPT</original>
    <variation>QPP</variation>
    <location>
        <begin position="41"/>
        <end position="43"/>
    </location>
</feature>
<feature type="sequence conflict" description="In Ref. 5 and 6." evidence="10" ref="5 6">
    <original>I</original>
    <variation>V</variation>
    <location>
        <position position="319"/>
    </location>
</feature>